<proteinExistence type="inferred from homology"/>
<evidence type="ECO:0000255" key="1">
    <source>
        <dbReference type="HAMAP-Rule" id="MF_00390"/>
    </source>
</evidence>
<feature type="chain" id="PRO_1000060747" description="Sulfurtransferase TusD">
    <location>
        <begin position="1"/>
        <end position="128"/>
    </location>
</feature>
<feature type="active site" description="Cysteine persulfide intermediate" evidence="1">
    <location>
        <position position="78"/>
    </location>
</feature>
<comment type="function">
    <text evidence="1">Part of a sulfur-relay system required for 2-thiolation of 5-methylaminomethyl-2-thiouridine (mnm(5)s(2)U) at tRNA wobble positions. Accepts sulfur from TusA and transfers it in turn to TusE.</text>
</comment>
<comment type="subunit">
    <text evidence="1">Heterohexamer, formed by a dimer of trimers. The hexameric TusBCD complex contains 2 copies each of TusB, TusC and TusD. The TusBCD complex interacts with TusE.</text>
</comment>
<comment type="subcellular location">
    <subcellularLocation>
        <location evidence="1">Cytoplasm</location>
    </subcellularLocation>
</comment>
<comment type="similarity">
    <text evidence="1">Belongs to the DsrE/TusD family.</text>
</comment>
<reference key="1">
    <citation type="journal article" date="2008" name="J. Bacteriol.">
        <title>The pangenome structure of Escherichia coli: comparative genomic analysis of E. coli commensal and pathogenic isolates.</title>
        <authorList>
            <person name="Rasko D.A."/>
            <person name="Rosovitz M.J."/>
            <person name="Myers G.S.A."/>
            <person name="Mongodin E.F."/>
            <person name="Fricke W.F."/>
            <person name="Gajer P."/>
            <person name="Crabtree J."/>
            <person name="Sebaihia M."/>
            <person name="Thomson N.R."/>
            <person name="Chaudhuri R."/>
            <person name="Henderson I.R."/>
            <person name="Sperandio V."/>
            <person name="Ravel J."/>
        </authorList>
    </citation>
    <scope>NUCLEOTIDE SEQUENCE [LARGE SCALE GENOMIC DNA]</scope>
    <source>
        <strain>HS</strain>
    </source>
</reference>
<organism>
    <name type="scientific">Escherichia coli O9:H4 (strain HS)</name>
    <dbReference type="NCBI Taxonomy" id="331112"/>
    <lineage>
        <taxon>Bacteria</taxon>
        <taxon>Pseudomonadati</taxon>
        <taxon>Pseudomonadota</taxon>
        <taxon>Gammaproteobacteria</taxon>
        <taxon>Enterobacterales</taxon>
        <taxon>Enterobacteriaceae</taxon>
        <taxon>Escherichia</taxon>
    </lineage>
</organism>
<sequence>MRFAIVVTGPAYGTQQASSAFQFAQALIVEGHELSSVFFYREGVYNANQLTSPASDEFDLVRGWQQLNAQHGVALNICVAAALRRGIVDETEAGRLGLASSNLQPGFTLSGLGALAEASLTCDRVVQF</sequence>
<accession>A8A5F2</accession>
<protein>
    <recommendedName>
        <fullName evidence="1">Sulfurtransferase TusD</fullName>
        <ecNumber evidence="1">2.8.1.-</ecNumber>
    </recommendedName>
    <alternativeName>
        <fullName evidence="1">tRNA 2-thiouridine synthesizing protein D</fullName>
    </alternativeName>
</protein>
<keyword id="KW-0963">Cytoplasm</keyword>
<keyword id="KW-0808">Transferase</keyword>
<keyword id="KW-0819">tRNA processing</keyword>
<name>TUSD_ECOHS</name>
<dbReference type="EC" id="2.8.1.-" evidence="1"/>
<dbReference type="EMBL" id="CP000802">
    <property type="protein sequence ID" value="ABV07756.1"/>
    <property type="molecule type" value="Genomic_DNA"/>
</dbReference>
<dbReference type="RefSeq" id="WP_001209710.1">
    <property type="nucleotide sequence ID" value="NC_009800.1"/>
</dbReference>
<dbReference type="SMR" id="A8A5F2"/>
<dbReference type="GeneID" id="75206288"/>
<dbReference type="KEGG" id="ecx:EcHS_A3541"/>
<dbReference type="HOGENOM" id="CLU_132095_0_0_6"/>
<dbReference type="GO" id="GO:1990228">
    <property type="term" value="C:sulfurtransferase complex"/>
    <property type="evidence" value="ECO:0007669"/>
    <property type="project" value="TreeGrafter"/>
</dbReference>
<dbReference type="GO" id="GO:0097163">
    <property type="term" value="F:sulfur carrier activity"/>
    <property type="evidence" value="ECO:0007669"/>
    <property type="project" value="TreeGrafter"/>
</dbReference>
<dbReference type="GO" id="GO:0016783">
    <property type="term" value="F:sulfurtransferase activity"/>
    <property type="evidence" value="ECO:0007669"/>
    <property type="project" value="UniProtKB-UniRule"/>
</dbReference>
<dbReference type="GO" id="GO:0002143">
    <property type="term" value="P:tRNA wobble position uridine thiolation"/>
    <property type="evidence" value="ECO:0007669"/>
    <property type="project" value="TreeGrafter"/>
</dbReference>
<dbReference type="FunFam" id="3.40.1260.10:FF:000001">
    <property type="entry name" value="Sulfurtransferase TusD"/>
    <property type="match status" value="1"/>
</dbReference>
<dbReference type="Gene3D" id="3.40.1260.10">
    <property type="entry name" value="DsrEFH-like"/>
    <property type="match status" value="1"/>
</dbReference>
<dbReference type="HAMAP" id="MF_00390">
    <property type="entry name" value="Thiourid_synth_D"/>
    <property type="match status" value="1"/>
</dbReference>
<dbReference type="InterPro" id="IPR027396">
    <property type="entry name" value="DsrEFH-like"/>
</dbReference>
<dbReference type="InterPro" id="IPR003787">
    <property type="entry name" value="Sulphur_relay_DsrE/F-like"/>
</dbReference>
<dbReference type="InterPro" id="IPR017463">
    <property type="entry name" value="Sulphur_relay_TusD/DsrE"/>
</dbReference>
<dbReference type="NCBIfam" id="NF001237">
    <property type="entry name" value="PRK00207.1"/>
    <property type="match status" value="1"/>
</dbReference>
<dbReference type="NCBIfam" id="TIGR03012">
    <property type="entry name" value="sulf_tusD_dsrE"/>
    <property type="match status" value="1"/>
</dbReference>
<dbReference type="PANTHER" id="PTHR34874">
    <property type="entry name" value="PROTEIN YCHN"/>
    <property type="match status" value="1"/>
</dbReference>
<dbReference type="PANTHER" id="PTHR34874:SF3">
    <property type="entry name" value="SULFURTRANSFERASE TUSD"/>
    <property type="match status" value="1"/>
</dbReference>
<dbReference type="Pfam" id="PF02635">
    <property type="entry name" value="DsrE"/>
    <property type="match status" value="1"/>
</dbReference>
<dbReference type="SUPFAM" id="SSF75169">
    <property type="entry name" value="DsrEFH-like"/>
    <property type="match status" value="1"/>
</dbReference>
<gene>
    <name evidence="1" type="primary">tusD</name>
    <name type="ordered locus">EcHS_A3541</name>
</gene>